<reference key="1">
    <citation type="journal article" date="2000" name="Proc. Natl. Acad. Sci. U.S.A.">
        <title>Genome sequence of Halobacterium species NRC-1.</title>
        <authorList>
            <person name="Ng W.V."/>
            <person name="Kennedy S.P."/>
            <person name="Mahairas G.G."/>
            <person name="Berquist B."/>
            <person name="Pan M."/>
            <person name="Shukla H.D."/>
            <person name="Lasky S.R."/>
            <person name="Baliga N.S."/>
            <person name="Thorsson V."/>
            <person name="Sbrogna J."/>
            <person name="Swartzell S."/>
            <person name="Weir D."/>
            <person name="Hall J."/>
            <person name="Dahl T.A."/>
            <person name="Welti R."/>
            <person name="Goo Y.A."/>
            <person name="Leithauser B."/>
            <person name="Keller K."/>
            <person name="Cruz R."/>
            <person name="Danson M.J."/>
            <person name="Hough D.W."/>
            <person name="Maddocks D.G."/>
            <person name="Jablonski P.E."/>
            <person name="Krebs M.P."/>
            <person name="Angevine C.M."/>
            <person name="Dale H."/>
            <person name="Isenbarger T.A."/>
            <person name="Peck R.F."/>
            <person name="Pohlschroder M."/>
            <person name="Spudich J.L."/>
            <person name="Jung K.-H."/>
            <person name="Alam M."/>
            <person name="Freitas T."/>
            <person name="Hou S."/>
            <person name="Daniels C.J."/>
            <person name="Dennis P.P."/>
            <person name="Omer A.D."/>
            <person name="Ebhardt H."/>
            <person name="Lowe T.M."/>
            <person name="Liang P."/>
            <person name="Riley M."/>
            <person name="Hood L."/>
            <person name="DasSarma S."/>
        </authorList>
    </citation>
    <scope>NUCLEOTIDE SEQUENCE [LARGE SCALE GENOMIC DNA]</scope>
    <source>
        <strain>ATCC 700922 / JCM 11081 / NRC-1</strain>
    </source>
</reference>
<accession>Q9HMH9</accession>
<keyword id="KW-0378">Hydrolase</keyword>
<keyword id="KW-0479">Metal-binding</keyword>
<keyword id="KW-0665">Pyrimidine biosynthesis</keyword>
<keyword id="KW-1185">Reference proteome</keyword>
<keyword id="KW-0862">Zinc</keyword>
<sequence length="422" mass="44817">MRVIRDAVLADGRVRDIRLDGERIDAVGTALDGELFVDANADYRVLPGMIDAHVHFRQPGFEHKETWASGSRSAAAGGVTTVVDQPNTAPPTVTGDAVDEKAAHAAADSVVDWGVNGGVTGEWDPASLFDRSLFALGEVFLADSTGDMGIDAALFRDACQRAASEDVVVTVHAEDADRFDTAAKSRSDADAWSAYRTPEAEAAAVERAVEVGTEAGATIHIAHTSTPEGVDAAAAGGATCEATPHHLFLSRDDLDDLGTFGRMNPPLRSDPRREALFERLADGRIDVVATDHAPHTRAEKAADIWDAPSGVPGVETALPLLLGAAHRGELSYERVRDVTAANPADVFGLERKGHIAAGRDADLVLVDPDDAREIHGDDLHSNCEWTPFEGHVGVFPAMTLVRGTTVWDGDTVSAFDGRNVRQ</sequence>
<proteinExistence type="inferred from homology"/>
<gene>
    <name evidence="1" type="primary">pyrC</name>
    <name type="ordered locus">VNG_2533G</name>
</gene>
<dbReference type="EC" id="3.5.2.3" evidence="1"/>
<dbReference type="EMBL" id="AE004437">
    <property type="protein sequence ID" value="AAG20592.1"/>
    <property type="molecule type" value="Genomic_DNA"/>
</dbReference>
<dbReference type="PIR" id="D84403">
    <property type="entry name" value="D84403"/>
</dbReference>
<dbReference type="RefSeq" id="WP_010903894.1">
    <property type="nucleotide sequence ID" value="NC_002607.1"/>
</dbReference>
<dbReference type="SMR" id="Q9HMH9"/>
<dbReference type="FunCoup" id="Q9HMH9">
    <property type="interactions" value="78"/>
</dbReference>
<dbReference type="STRING" id="64091.VNG_2533G"/>
<dbReference type="PaxDb" id="64091-VNG_2533G"/>
<dbReference type="KEGG" id="hal:VNG_2533G"/>
<dbReference type="PATRIC" id="fig|64091.14.peg.1964"/>
<dbReference type="HOGENOM" id="CLU_015572_1_1_2"/>
<dbReference type="InParanoid" id="Q9HMH9"/>
<dbReference type="OrthoDB" id="50279at2157"/>
<dbReference type="PhylomeDB" id="Q9HMH9"/>
<dbReference type="UniPathway" id="UPA00070">
    <property type="reaction ID" value="UER00117"/>
</dbReference>
<dbReference type="Proteomes" id="UP000000554">
    <property type="component" value="Chromosome"/>
</dbReference>
<dbReference type="GO" id="GO:0005737">
    <property type="term" value="C:cytoplasm"/>
    <property type="evidence" value="ECO:0000318"/>
    <property type="project" value="GO_Central"/>
</dbReference>
<dbReference type="GO" id="GO:0004038">
    <property type="term" value="F:allantoinase activity"/>
    <property type="evidence" value="ECO:0000318"/>
    <property type="project" value="GO_Central"/>
</dbReference>
<dbReference type="GO" id="GO:0004151">
    <property type="term" value="F:dihydroorotase activity"/>
    <property type="evidence" value="ECO:0007669"/>
    <property type="project" value="UniProtKB-UniRule"/>
</dbReference>
<dbReference type="GO" id="GO:0008270">
    <property type="term" value="F:zinc ion binding"/>
    <property type="evidence" value="ECO:0007669"/>
    <property type="project" value="UniProtKB-UniRule"/>
</dbReference>
<dbReference type="GO" id="GO:0044205">
    <property type="term" value="P:'de novo' UMP biosynthetic process"/>
    <property type="evidence" value="ECO:0007669"/>
    <property type="project" value="UniProtKB-UniRule"/>
</dbReference>
<dbReference type="GO" id="GO:0006145">
    <property type="term" value="P:purine nucleobase catabolic process"/>
    <property type="evidence" value="ECO:0000318"/>
    <property type="project" value="GO_Central"/>
</dbReference>
<dbReference type="CDD" id="cd01318">
    <property type="entry name" value="DHOase_IIb"/>
    <property type="match status" value="1"/>
</dbReference>
<dbReference type="Gene3D" id="3.20.20.140">
    <property type="entry name" value="Metal-dependent hydrolases"/>
    <property type="match status" value="1"/>
</dbReference>
<dbReference type="Gene3D" id="2.30.40.10">
    <property type="entry name" value="Urease, subunit C, domain 1"/>
    <property type="match status" value="1"/>
</dbReference>
<dbReference type="HAMAP" id="MF_00220_A">
    <property type="entry name" value="PyrC_classI_A"/>
    <property type="match status" value="1"/>
</dbReference>
<dbReference type="InterPro" id="IPR006680">
    <property type="entry name" value="Amidohydro-rel"/>
</dbReference>
<dbReference type="InterPro" id="IPR004722">
    <property type="entry name" value="DHOase"/>
</dbReference>
<dbReference type="InterPro" id="IPR050138">
    <property type="entry name" value="DHOase/Allantoinase_Hydrolase"/>
</dbReference>
<dbReference type="InterPro" id="IPR002195">
    <property type="entry name" value="Dihydroorotase_CS"/>
</dbReference>
<dbReference type="InterPro" id="IPR011059">
    <property type="entry name" value="Metal-dep_hydrolase_composite"/>
</dbReference>
<dbReference type="InterPro" id="IPR032466">
    <property type="entry name" value="Metal_Hydrolase"/>
</dbReference>
<dbReference type="NCBIfam" id="NF002668">
    <property type="entry name" value="PRK02382.1"/>
    <property type="match status" value="1"/>
</dbReference>
<dbReference type="NCBIfam" id="TIGR00857">
    <property type="entry name" value="pyrC_multi"/>
    <property type="match status" value="1"/>
</dbReference>
<dbReference type="PANTHER" id="PTHR43668">
    <property type="entry name" value="ALLANTOINASE"/>
    <property type="match status" value="1"/>
</dbReference>
<dbReference type="PANTHER" id="PTHR43668:SF2">
    <property type="entry name" value="ALLANTOINASE"/>
    <property type="match status" value="1"/>
</dbReference>
<dbReference type="Pfam" id="PF01979">
    <property type="entry name" value="Amidohydro_1"/>
    <property type="match status" value="1"/>
</dbReference>
<dbReference type="SUPFAM" id="SSF51338">
    <property type="entry name" value="Composite domain of metallo-dependent hydrolases"/>
    <property type="match status" value="2"/>
</dbReference>
<dbReference type="SUPFAM" id="SSF51556">
    <property type="entry name" value="Metallo-dependent hydrolases"/>
    <property type="match status" value="1"/>
</dbReference>
<dbReference type="PROSITE" id="PS00482">
    <property type="entry name" value="DIHYDROOROTASE_1"/>
    <property type="match status" value="1"/>
</dbReference>
<dbReference type="PROSITE" id="PS00483">
    <property type="entry name" value="DIHYDROOROTASE_2"/>
    <property type="match status" value="1"/>
</dbReference>
<evidence type="ECO:0000255" key="1">
    <source>
        <dbReference type="HAMAP-Rule" id="MF_00220"/>
    </source>
</evidence>
<name>PYRC_HALSA</name>
<comment type="function">
    <text evidence="1">Catalyzes the reversible cyclization of carbamoyl aspartate to dihydroorotate.</text>
</comment>
<comment type="catalytic activity">
    <reaction evidence="1">
        <text>(S)-dihydroorotate + H2O = N-carbamoyl-L-aspartate + H(+)</text>
        <dbReference type="Rhea" id="RHEA:24296"/>
        <dbReference type="ChEBI" id="CHEBI:15377"/>
        <dbReference type="ChEBI" id="CHEBI:15378"/>
        <dbReference type="ChEBI" id="CHEBI:30864"/>
        <dbReference type="ChEBI" id="CHEBI:32814"/>
        <dbReference type="EC" id="3.5.2.3"/>
    </reaction>
</comment>
<comment type="cofactor">
    <cofactor evidence="1">
        <name>Zn(2+)</name>
        <dbReference type="ChEBI" id="CHEBI:29105"/>
    </cofactor>
    <text evidence="1">Binds 2 Zn(2+) ions per subunit.</text>
</comment>
<comment type="pathway">
    <text evidence="1">Pyrimidine metabolism; UMP biosynthesis via de novo pathway; (S)-dihydroorotate from bicarbonate: step 3/3.</text>
</comment>
<comment type="similarity">
    <text evidence="1">Belongs to the metallo-dependent hydrolases superfamily. DHOase family. Class I DHOase subfamily.</text>
</comment>
<feature type="chain" id="PRO_0000147268" description="Dihydroorotase">
    <location>
        <begin position="1"/>
        <end position="422"/>
    </location>
</feature>
<feature type="active site" evidence="1">
    <location>
        <position position="291"/>
    </location>
</feature>
<feature type="binding site" evidence="1">
    <location>
        <position position="53"/>
    </location>
    <ligand>
        <name>Zn(2+)</name>
        <dbReference type="ChEBI" id="CHEBI:29105"/>
        <label>1</label>
    </ligand>
</feature>
<feature type="binding site" evidence="1">
    <location>
        <begin position="55"/>
        <end position="57"/>
    </location>
    <ligand>
        <name>substrate</name>
    </ligand>
</feature>
<feature type="binding site" evidence="1">
    <location>
        <position position="55"/>
    </location>
    <ligand>
        <name>Zn(2+)</name>
        <dbReference type="ChEBI" id="CHEBI:29105"/>
        <label>1</label>
    </ligand>
</feature>
<feature type="binding site" evidence="1">
    <location>
        <position position="87"/>
    </location>
    <ligand>
        <name>substrate</name>
    </ligand>
</feature>
<feature type="binding site" evidence="1">
    <location>
        <position position="138"/>
    </location>
    <ligand>
        <name>Zn(2+)</name>
        <dbReference type="ChEBI" id="CHEBI:29105"/>
        <label>1</label>
    </ligand>
</feature>
<feature type="binding site" evidence="1">
    <location>
        <position position="138"/>
    </location>
    <ligand>
        <name>Zn(2+)</name>
        <dbReference type="ChEBI" id="CHEBI:29105"/>
        <label>2</label>
    </ligand>
</feature>
<feature type="binding site" evidence="1">
    <location>
        <position position="172"/>
    </location>
    <ligand>
        <name>Zn(2+)</name>
        <dbReference type="ChEBI" id="CHEBI:29105"/>
        <label>2</label>
    </ligand>
</feature>
<feature type="binding site" evidence="1">
    <location>
        <position position="223"/>
    </location>
    <ligand>
        <name>Zn(2+)</name>
        <dbReference type="ChEBI" id="CHEBI:29105"/>
        <label>2</label>
    </ligand>
</feature>
<feature type="binding site" evidence="1">
    <location>
        <position position="291"/>
    </location>
    <ligand>
        <name>Zn(2+)</name>
        <dbReference type="ChEBI" id="CHEBI:29105"/>
        <label>1</label>
    </ligand>
</feature>
<feature type="binding site" evidence="1">
    <location>
        <position position="295"/>
    </location>
    <ligand>
        <name>substrate</name>
    </ligand>
</feature>
<organism>
    <name type="scientific">Halobacterium salinarum (strain ATCC 700922 / JCM 11081 / NRC-1)</name>
    <name type="common">Halobacterium halobium</name>
    <dbReference type="NCBI Taxonomy" id="64091"/>
    <lineage>
        <taxon>Archaea</taxon>
        <taxon>Methanobacteriati</taxon>
        <taxon>Methanobacteriota</taxon>
        <taxon>Stenosarchaea group</taxon>
        <taxon>Halobacteria</taxon>
        <taxon>Halobacteriales</taxon>
        <taxon>Halobacteriaceae</taxon>
        <taxon>Halobacterium</taxon>
        <taxon>Halobacterium salinarum NRC-34001</taxon>
    </lineage>
</organism>
<protein>
    <recommendedName>
        <fullName evidence="1">Dihydroorotase</fullName>
        <shortName evidence="1">DHOase</shortName>
        <ecNumber evidence="1">3.5.2.3</ecNumber>
    </recommendedName>
</protein>